<feature type="transit peptide" description="Mitochondrion" evidence="2">
    <location>
        <begin position="1"/>
        <end position="52"/>
    </location>
</feature>
<feature type="chain" id="PRO_0000043151" description="Presequence translocated-associated motor subunit PAM17, mitochondrial">
    <location>
        <begin position="53"/>
        <end position="185"/>
    </location>
</feature>
<feature type="transmembrane region" description="Helical" evidence="2">
    <location>
        <begin position="55"/>
        <end position="75"/>
    </location>
</feature>
<feature type="transmembrane region" description="Helical" evidence="2">
    <location>
        <begin position="90"/>
        <end position="110"/>
    </location>
</feature>
<gene>
    <name type="primary">PAM17</name>
    <name type="ordered locus">CAALFM_C302500WA</name>
    <name type="ORF">CaO19.240</name>
    <name type="ORF">CaO19.7870</name>
</gene>
<dbReference type="EMBL" id="CP017625">
    <property type="protein sequence ID" value="AOW28285.1"/>
    <property type="molecule type" value="Genomic_DNA"/>
</dbReference>
<dbReference type="RefSeq" id="XP_719939.2">
    <property type="nucleotide sequence ID" value="XM_714846.2"/>
</dbReference>
<dbReference type="FunCoup" id="Q5AEM8">
    <property type="interactions" value="59"/>
</dbReference>
<dbReference type="STRING" id="237561.Q5AEM8"/>
<dbReference type="EnsemblFungi" id="C3_02500W_A-T">
    <property type="protein sequence ID" value="C3_02500W_A-T-p1"/>
    <property type="gene ID" value="C3_02500W_A"/>
</dbReference>
<dbReference type="GeneID" id="3638369"/>
<dbReference type="KEGG" id="cal:CAALFM_C302500WA"/>
<dbReference type="CGD" id="CAL0000186714">
    <property type="gene designation" value="PAM17"/>
</dbReference>
<dbReference type="VEuPathDB" id="FungiDB:C3_02500W_A"/>
<dbReference type="eggNOG" id="ENOG502S1B1">
    <property type="taxonomic scope" value="Eukaryota"/>
</dbReference>
<dbReference type="HOGENOM" id="CLU_068297_2_0_1"/>
<dbReference type="InParanoid" id="Q5AEM8"/>
<dbReference type="OrthoDB" id="5970083at2759"/>
<dbReference type="PRO" id="PR:Q5AEM8"/>
<dbReference type="Proteomes" id="UP000000559">
    <property type="component" value="Chromosome 3"/>
</dbReference>
<dbReference type="GO" id="GO:0001405">
    <property type="term" value="C:PAM complex, Tim23 associated import motor"/>
    <property type="evidence" value="ECO:0000318"/>
    <property type="project" value="GO_Central"/>
</dbReference>
<dbReference type="GO" id="GO:0005886">
    <property type="term" value="C:plasma membrane"/>
    <property type="evidence" value="ECO:0000314"/>
    <property type="project" value="CGD"/>
</dbReference>
<dbReference type="GO" id="GO:0030150">
    <property type="term" value="P:protein import into mitochondrial matrix"/>
    <property type="evidence" value="ECO:0000318"/>
    <property type="project" value="GO_Central"/>
</dbReference>
<dbReference type="InterPro" id="IPR013875">
    <property type="entry name" value="Pam17"/>
</dbReference>
<dbReference type="PANTHER" id="PTHR28021">
    <property type="entry name" value="PRESEQUENCE TRANSLOCATED-ASSOCIATED MOTOR SUBUNIT PAM17, MITOCHONDRIAL"/>
    <property type="match status" value="1"/>
</dbReference>
<dbReference type="PANTHER" id="PTHR28021:SF1">
    <property type="entry name" value="PRESEQUENCE TRANSLOCATED-ASSOCIATED MOTOR SUBUNIT PAM17, MITOCHONDRIAL"/>
    <property type="match status" value="1"/>
</dbReference>
<dbReference type="Pfam" id="PF08566">
    <property type="entry name" value="Pam17"/>
    <property type="match status" value="1"/>
</dbReference>
<reference key="1">
    <citation type="journal article" date="2004" name="Proc. Natl. Acad. Sci. U.S.A.">
        <title>The diploid genome sequence of Candida albicans.</title>
        <authorList>
            <person name="Jones T."/>
            <person name="Federspiel N.A."/>
            <person name="Chibana H."/>
            <person name="Dungan J."/>
            <person name="Kalman S."/>
            <person name="Magee B.B."/>
            <person name="Newport G."/>
            <person name="Thorstenson Y.R."/>
            <person name="Agabian N."/>
            <person name="Magee P.T."/>
            <person name="Davis R.W."/>
            <person name="Scherer S."/>
        </authorList>
    </citation>
    <scope>NUCLEOTIDE SEQUENCE [LARGE SCALE GENOMIC DNA]</scope>
    <source>
        <strain>SC5314 / ATCC MYA-2876</strain>
    </source>
</reference>
<reference key="2">
    <citation type="journal article" date="2007" name="Genome Biol.">
        <title>Assembly of the Candida albicans genome into sixteen supercontigs aligned on the eight chromosomes.</title>
        <authorList>
            <person name="van het Hoog M."/>
            <person name="Rast T.J."/>
            <person name="Martchenko M."/>
            <person name="Grindle S."/>
            <person name="Dignard D."/>
            <person name="Hogues H."/>
            <person name="Cuomo C."/>
            <person name="Berriman M."/>
            <person name="Scherer S."/>
            <person name="Magee B.B."/>
            <person name="Whiteway M."/>
            <person name="Chibana H."/>
            <person name="Nantel A."/>
            <person name="Magee P.T."/>
        </authorList>
    </citation>
    <scope>GENOME REANNOTATION</scope>
    <source>
        <strain>SC5314 / ATCC MYA-2876</strain>
    </source>
</reference>
<reference key="3">
    <citation type="journal article" date="2013" name="Genome Biol.">
        <title>Assembly of a phased diploid Candida albicans genome facilitates allele-specific measurements and provides a simple model for repeat and indel structure.</title>
        <authorList>
            <person name="Muzzey D."/>
            <person name="Schwartz K."/>
            <person name="Weissman J.S."/>
            <person name="Sherlock G."/>
        </authorList>
    </citation>
    <scope>NUCLEOTIDE SEQUENCE [LARGE SCALE GENOMIC DNA]</scope>
    <scope>GENOME REANNOTATION</scope>
    <source>
        <strain>SC5314 / ATCC MYA-2876</strain>
    </source>
</reference>
<sequence>MFSLGVQSRLFTRRALFSGFRFNSTTTTTTTASQPRLTWVDYFQLKKQNNRINTIAGVFTGLGGAFITLSYLGNIEIDVEKPIMGFDPLMVMGGAVILGGLVGFLVGPFIGSSIFRLTNRAQLKQFELKNTEFLSRLRIKRPDPSSQSFSNPIPDYYGEKIYSLKDYKQWLRDCNAFRRKSKEFL</sequence>
<comment type="function">
    <text evidence="1">Component of the PAM complex, a complex required for the translocation of transit peptide-containing proteins from the inner membrane into the mitochondrial matrix in an ATP-dependent manner.</text>
</comment>
<comment type="subunit">
    <text evidence="1">Component of the PAM complex, at least composed of mtHsp70 (SSC1), MGE1, TIM44, PAM16, PAM17 and PAM18.</text>
</comment>
<comment type="subcellular location">
    <subcellularLocation>
        <location evidence="1">Mitochondrion inner membrane</location>
        <topology evidence="1">Multi-pass membrane protein</topology>
    </subcellularLocation>
</comment>
<comment type="similarity">
    <text evidence="3">Belongs to the PAM17 family.</text>
</comment>
<accession>Q5AEM8</accession>
<accession>A0A1D8PJG3</accession>
<keyword id="KW-0472">Membrane</keyword>
<keyword id="KW-0496">Mitochondrion</keyword>
<keyword id="KW-0999">Mitochondrion inner membrane</keyword>
<keyword id="KW-0653">Protein transport</keyword>
<keyword id="KW-1185">Reference proteome</keyword>
<keyword id="KW-0809">Transit peptide</keyword>
<keyword id="KW-0811">Translocation</keyword>
<keyword id="KW-0812">Transmembrane</keyword>
<keyword id="KW-1133">Transmembrane helix</keyword>
<keyword id="KW-0813">Transport</keyword>
<organism>
    <name type="scientific">Candida albicans (strain SC5314 / ATCC MYA-2876)</name>
    <name type="common">Yeast</name>
    <dbReference type="NCBI Taxonomy" id="237561"/>
    <lineage>
        <taxon>Eukaryota</taxon>
        <taxon>Fungi</taxon>
        <taxon>Dikarya</taxon>
        <taxon>Ascomycota</taxon>
        <taxon>Saccharomycotina</taxon>
        <taxon>Pichiomycetes</taxon>
        <taxon>Debaryomycetaceae</taxon>
        <taxon>Candida/Lodderomyces clade</taxon>
        <taxon>Candida</taxon>
    </lineage>
</organism>
<name>PAM17_CANAL</name>
<proteinExistence type="inferred from homology"/>
<evidence type="ECO:0000250" key="1"/>
<evidence type="ECO:0000255" key="2"/>
<evidence type="ECO:0000305" key="3"/>
<protein>
    <recommendedName>
        <fullName>Presequence translocated-associated motor subunit PAM17, mitochondrial</fullName>
    </recommendedName>
</protein>